<accession>Q9GF63</accession>
<protein>
    <recommendedName>
        <fullName evidence="1">Maturase K</fullName>
    </recommendedName>
    <alternativeName>
        <fullName evidence="1">Intron maturase</fullName>
    </alternativeName>
</protein>
<organism>
    <name type="scientific">Arabis alpina</name>
    <name type="common">Alpine rock-cress</name>
    <dbReference type="NCBI Taxonomy" id="50452"/>
    <lineage>
        <taxon>Eukaryota</taxon>
        <taxon>Viridiplantae</taxon>
        <taxon>Streptophyta</taxon>
        <taxon>Embryophyta</taxon>
        <taxon>Tracheophyta</taxon>
        <taxon>Spermatophyta</taxon>
        <taxon>Magnoliopsida</taxon>
        <taxon>eudicotyledons</taxon>
        <taxon>Gunneridae</taxon>
        <taxon>Pentapetalae</taxon>
        <taxon>rosids</taxon>
        <taxon>malvids</taxon>
        <taxon>Brassicales</taxon>
        <taxon>Brassicaceae</taxon>
        <taxon>Arabideae</taxon>
        <taxon>Arabis</taxon>
    </lineage>
</organism>
<gene>
    <name evidence="1" type="primary">matK</name>
</gene>
<reference key="1">
    <citation type="submission" date="1999-04" db="EMBL/GenBank/DDBJ databases">
        <title>Evolutionary analysis of plastidic maturase K and nuclear chalcone synthase and their utility for phylogenetic reconstructions within the Brassicaceae.</title>
        <authorList>
            <person name="Koch M."/>
            <person name="Mitchell-Olds T."/>
        </authorList>
    </citation>
    <scope>NUCLEOTIDE SEQUENCE [GENOMIC DNA]</scope>
    <source>
        <strain>Aalp2</strain>
    </source>
</reference>
<keyword id="KW-0150">Chloroplast</keyword>
<keyword id="KW-0507">mRNA processing</keyword>
<keyword id="KW-0934">Plastid</keyword>
<keyword id="KW-0694">RNA-binding</keyword>
<keyword id="KW-0819">tRNA processing</keyword>
<evidence type="ECO:0000255" key="1">
    <source>
        <dbReference type="HAMAP-Rule" id="MF_01390"/>
    </source>
</evidence>
<proteinExistence type="inferred from homology"/>
<feature type="chain" id="PRO_0000143248" description="Maturase K">
    <location>
        <begin position="1"/>
        <end position="506"/>
    </location>
</feature>
<name>MATK_ARAAL</name>
<sequence>MEKFQGYLEFDGARQQSFLYPLFFREYIYVLAYDHGLNRLNRNRSIFLENADADYDKKYSSLIVKRLILRMYEQNRLSIPTTDLHKNPFLGHTNPLYYQMISVLFAVIVEIPFSLRLGSSFEGKQLKKSYNLQSIHSIFPFLEDKFSHSNYVLDVLIPYPIHLEILVQTLRYRVKDASSLHFFRLCXYEYCNWKNFDIKKKLILNPRFFLFLYNSHVCEYESIFFFLRKRSSHLRSTAYEVLFERILFYAKIQHFLKVFVNNFPAILGLLKDPFLHYVRYHGKSILATKDTPLLMNKWKFYFVNLWQFYFSVWFQSQKIHINQLSKDNLEFLGYLSSLRLNPLVVRSQMLENSFLIDNIRIKLDNKIPISSIIGSLTKDKFCNLLGHPISKANWTESSDSDILNRFVRICRNISHYYSGSSKKKHLYRIKYILRLCCVKTLARKHKSTVRAFLKRLGSGLLEEFLTGEDQVLSLIFPRSYYASKRLYRVRVWYLDILYLNDLVNHD</sequence>
<comment type="function">
    <text evidence="1">Usually encoded in the trnK tRNA gene intron. Probably assists in splicing its own and other chloroplast group II introns.</text>
</comment>
<comment type="subcellular location">
    <subcellularLocation>
        <location>Plastid</location>
        <location>Chloroplast</location>
    </subcellularLocation>
</comment>
<comment type="similarity">
    <text evidence="1">Belongs to the intron maturase 2 family. MatK subfamily.</text>
</comment>
<dbReference type="EMBL" id="AF144329">
    <property type="protein sequence ID" value="AAG43298.1"/>
    <property type="molecule type" value="Genomic_DNA"/>
</dbReference>
<dbReference type="eggNOG" id="ENOG502QWRZ">
    <property type="taxonomic scope" value="Eukaryota"/>
</dbReference>
<dbReference type="GO" id="GO:0009507">
    <property type="term" value="C:chloroplast"/>
    <property type="evidence" value="ECO:0007669"/>
    <property type="project" value="UniProtKB-SubCell"/>
</dbReference>
<dbReference type="GO" id="GO:0003723">
    <property type="term" value="F:RNA binding"/>
    <property type="evidence" value="ECO:0007669"/>
    <property type="project" value="UniProtKB-KW"/>
</dbReference>
<dbReference type="GO" id="GO:0006397">
    <property type="term" value="P:mRNA processing"/>
    <property type="evidence" value="ECO:0007669"/>
    <property type="project" value="UniProtKB-KW"/>
</dbReference>
<dbReference type="GO" id="GO:0008380">
    <property type="term" value="P:RNA splicing"/>
    <property type="evidence" value="ECO:0007669"/>
    <property type="project" value="UniProtKB-UniRule"/>
</dbReference>
<dbReference type="GO" id="GO:0008033">
    <property type="term" value="P:tRNA processing"/>
    <property type="evidence" value="ECO:0007669"/>
    <property type="project" value="UniProtKB-KW"/>
</dbReference>
<dbReference type="HAMAP" id="MF_01390">
    <property type="entry name" value="MatK"/>
    <property type="match status" value="1"/>
</dbReference>
<dbReference type="InterPro" id="IPR024937">
    <property type="entry name" value="Domain_X"/>
</dbReference>
<dbReference type="InterPro" id="IPR002866">
    <property type="entry name" value="Maturase_MatK"/>
</dbReference>
<dbReference type="InterPro" id="IPR024942">
    <property type="entry name" value="Maturase_MatK_N"/>
</dbReference>
<dbReference type="PANTHER" id="PTHR34811">
    <property type="entry name" value="MATURASE K"/>
    <property type="match status" value="1"/>
</dbReference>
<dbReference type="PANTHER" id="PTHR34811:SF1">
    <property type="entry name" value="MATURASE K"/>
    <property type="match status" value="1"/>
</dbReference>
<dbReference type="Pfam" id="PF01348">
    <property type="entry name" value="Intron_maturas2"/>
    <property type="match status" value="1"/>
</dbReference>
<dbReference type="Pfam" id="PF01824">
    <property type="entry name" value="MatK_N"/>
    <property type="match status" value="1"/>
</dbReference>
<geneLocation type="chloroplast"/>